<comment type="similarity">
    <text evidence="1">Belongs to the bacterial ribosomal protein bL35 family.</text>
</comment>
<dbReference type="EMBL" id="CP001191">
    <property type="protein sequence ID" value="ACI57527.1"/>
    <property type="molecule type" value="Genomic_DNA"/>
</dbReference>
<dbReference type="RefSeq" id="WP_003570998.1">
    <property type="nucleotide sequence ID" value="NC_011369.1"/>
</dbReference>
<dbReference type="SMR" id="B5ZXR8"/>
<dbReference type="STRING" id="395492.Rleg2_4268"/>
<dbReference type="GeneID" id="91146714"/>
<dbReference type="KEGG" id="rlt:Rleg2_4268"/>
<dbReference type="eggNOG" id="COG0291">
    <property type="taxonomic scope" value="Bacteria"/>
</dbReference>
<dbReference type="HOGENOM" id="CLU_169643_2_1_5"/>
<dbReference type="Proteomes" id="UP000008330">
    <property type="component" value="Chromosome"/>
</dbReference>
<dbReference type="GO" id="GO:0022625">
    <property type="term" value="C:cytosolic large ribosomal subunit"/>
    <property type="evidence" value="ECO:0007669"/>
    <property type="project" value="TreeGrafter"/>
</dbReference>
<dbReference type="GO" id="GO:0003735">
    <property type="term" value="F:structural constituent of ribosome"/>
    <property type="evidence" value="ECO:0007669"/>
    <property type="project" value="InterPro"/>
</dbReference>
<dbReference type="GO" id="GO:0006412">
    <property type="term" value="P:translation"/>
    <property type="evidence" value="ECO:0007669"/>
    <property type="project" value="UniProtKB-UniRule"/>
</dbReference>
<dbReference type="FunFam" id="4.10.410.60:FF:000001">
    <property type="entry name" value="50S ribosomal protein L35"/>
    <property type="match status" value="1"/>
</dbReference>
<dbReference type="Gene3D" id="4.10.410.60">
    <property type="match status" value="1"/>
</dbReference>
<dbReference type="HAMAP" id="MF_00514">
    <property type="entry name" value="Ribosomal_bL35"/>
    <property type="match status" value="1"/>
</dbReference>
<dbReference type="InterPro" id="IPR001706">
    <property type="entry name" value="Ribosomal_bL35"/>
</dbReference>
<dbReference type="InterPro" id="IPR021137">
    <property type="entry name" value="Ribosomal_bL35-like"/>
</dbReference>
<dbReference type="InterPro" id="IPR018265">
    <property type="entry name" value="Ribosomal_bL35_CS"/>
</dbReference>
<dbReference type="InterPro" id="IPR037229">
    <property type="entry name" value="Ribosomal_bL35_sf"/>
</dbReference>
<dbReference type="NCBIfam" id="TIGR00001">
    <property type="entry name" value="rpmI_bact"/>
    <property type="match status" value="1"/>
</dbReference>
<dbReference type="PANTHER" id="PTHR33343">
    <property type="entry name" value="54S RIBOSOMAL PROTEIN BL35M"/>
    <property type="match status" value="1"/>
</dbReference>
<dbReference type="PANTHER" id="PTHR33343:SF1">
    <property type="entry name" value="LARGE RIBOSOMAL SUBUNIT PROTEIN BL35M"/>
    <property type="match status" value="1"/>
</dbReference>
<dbReference type="Pfam" id="PF01632">
    <property type="entry name" value="Ribosomal_L35p"/>
    <property type="match status" value="1"/>
</dbReference>
<dbReference type="PRINTS" id="PR00064">
    <property type="entry name" value="RIBOSOMALL35"/>
</dbReference>
<dbReference type="SUPFAM" id="SSF143034">
    <property type="entry name" value="L35p-like"/>
    <property type="match status" value="1"/>
</dbReference>
<dbReference type="PROSITE" id="PS00936">
    <property type="entry name" value="RIBOSOMAL_L35"/>
    <property type="match status" value="1"/>
</dbReference>
<evidence type="ECO:0000255" key="1">
    <source>
        <dbReference type="HAMAP-Rule" id="MF_00514"/>
    </source>
</evidence>
<evidence type="ECO:0000305" key="2"/>
<gene>
    <name evidence="1" type="primary">rpmI</name>
    <name type="ordered locus">Rleg2_4268</name>
</gene>
<reference key="1">
    <citation type="journal article" date="2010" name="Stand. Genomic Sci.">
        <title>Complete genome sequence of Rhizobium leguminosarum bv trifolii strain WSM2304, an effective microsymbiont of the South American clover Trifolium polymorphum.</title>
        <authorList>
            <person name="Reeve W."/>
            <person name="O'Hara G."/>
            <person name="Chain P."/>
            <person name="Ardley J."/>
            <person name="Brau L."/>
            <person name="Nandesena K."/>
            <person name="Tiwari R."/>
            <person name="Malfatti S."/>
            <person name="Kiss H."/>
            <person name="Lapidus A."/>
            <person name="Copeland A."/>
            <person name="Nolan M."/>
            <person name="Land M."/>
            <person name="Ivanova N."/>
            <person name="Mavromatis K."/>
            <person name="Markowitz V."/>
            <person name="Kyrpides N."/>
            <person name="Melino V."/>
            <person name="Denton M."/>
            <person name="Yates R."/>
            <person name="Howieson J."/>
        </authorList>
    </citation>
    <scope>NUCLEOTIDE SEQUENCE [LARGE SCALE GENOMIC DNA]</scope>
    <source>
        <strain>WSM2304</strain>
    </source>
</reference>
<protein>
    <recommendedName>
        <fullName evidence="1">Large ribosomal subunit protein bL35</fullName>
    </recommendedName>
    <alternativeName>
        <fullName evidence="2">50S ribosomal protein L35</fullName>
    </alternativeName>
</protein>
<sequence length="67" mass="7414">MPKMKTKSSAKKRFKITATGKVKAAAAGKRHGMIKRTNKFIRDARGTMVLAEPDGRKVIKNYLPNGL</sequence>
<accession>B5ZXR8</accession>
<keyword id="KW-1185">Reference proteome</keyword>
<keyword id="KW-0687">Ribonucleoprotein</keyword>
<keyword id="KW-0689">Ribosomal protein</keyword>
<proteinExistence type="inferred from homology"/>
<organism>
    <name type="scientific">Rhizobium leguminosarum bv. trifolii (strain WSM2304)</name>
    <dbReference type="NCBI Taxonomy" id="395492"/>
    <lineage>
        <taxon>Bacteria</taxon>
        <taxon>Pseudomonadati</taxon>
        <taxon>Pseudomonadota</taxon>
        <taxon>Alphaproteobacteria</taxon>
        <taxon>Hyphomicrobiales</taxon>
        <taxon>Rhizobiaceae</taxon>
        <taxon>Rhizobium/Agrobacterium group</taxon>
        <taxon>Rhizobium</taxon>
    </lineage>
</organism>
<name>RL35_RHILW</name>
<feature type="chain" id="PRO_1000127398" description="Large ribosomal subunit protein bL35">
    <location>
        <begin position="1"/>
        <end position="67"/>
    </location>
</feature>